<comment type="function">
    <text evidence="1">RNaseP catalyzes the removal of the 5'-leader sequence from pre-tRNA to produce the mature 5'-terminus. It can also cleave other RNA substrates such as 4.5S RNA. The protein component plays an auxiliary but essential role in vivo by binding to the 5'-leader sequence and broadening the substrate specificity of the ribozyme.</text>
</comment>
<comment type="catalytic activity">
    <reaction evidence="1">
        <text>Endonucleolytic cleavage of RNA, removing 5'-extranucleotides from tRNA precursor.</text>
        <dbReference type="EC" id="3.1.26.5"/>
    </reaction>
</comment>
<comment type="subunit">
    <text evidence="1">Consists of a catalytic RNA component (M1 or rnpB) and a protein subunit.</text>
</comment>
<comment type="similarity">
    <text evidence="1">Belongs to the RnpA family.</text>
</comment>
<sequence length="119" mass="13800">MVKLAFPRELRLLTPSHFTFVFQQPQRAGTPQITILGRLNELGHPRIGLTVAKKHVKRAHERNRIKRLTRESFRLHQHALPSMDFVVLVKKGVADLDNRALTEALEKLWRRHCRQAPAS</sequence>
<protein>
    <recommendedName>
        <fullName evidence="1">Ribonuclease P protein component</fullName>
        <shortName evidence="1">RNase P protein</shortName>
        <shortName evidence="1">RNaseP protein</shortName>
        <ecNumber evidence="1">3.1.26.5</ecNumber>
    </recommendedName>
    <alternativeName>
        <fullName evidence="1">Protein C5</fullName>
    </alternativeName>
</protein>
<accession>A4TSL3</accession>
<organism>
    <name type="scientific">Yersinia pestis (strain Pestoides F)</name>
    <dbReference type="NCBI Taxonomy" id="386656"/>
    <lineage>
        <taxon>Bacteria</taxon>
        <taxon>Pseudomonadati</taxon>
        <taxon>Pseudomonadota</taxon>
        <taxon>Gammaproteobacteria</taxon>
        <taxon>Enterobacterales</taxon>
        <taxon>Yersiniaceae</taxon>
        <taxon>Yersinia</taxon>
    </lineage>
</organism>
<feature type="chain" id="PRO_1000021496" description="Ribonuclease P protein component">
    <location>
        <begin position="1"/>
        <end position="119"/>
    </location>
</feature>
<keyword id="KW-0255">Endonuclease</keyword>
<keyword id="KW-0378">Hydrolase</keyword>
<keyword id="KW-0540">Nuclease</keyword>
<keyword id="KW-0694">RNA-binding</keyword>
<keyword id="KW-0819">tRNA processing</keyword>
<evidence type="ECO:0000255" key="1">
    <source>
        <dbReference type="HAMAP-Rule" id="MF_00227"/>
    </source>
</evidence>
<gene>
    <name evidence="1" type="primary">rnpA</name>
    <name type="ordered locus">YPDSF_3934</name>
</gene>
<dbReference type="EC" id="3.1.26.5" evidence="1"/>
<dbReference type="EMBL" id="CP000668">
    <property type="protein sequence ID" value="ABP42275.1"/>
    <property type="molecule type" value="Genomic_DNA"/>
</dbReference>
<dbReference type="RefSeq" id="WP_002228153.1">
    <property type="nucleotide sequence ID" value="NZ_CP009715.1"/>
</dbReference>
<dbReference type="SMR" id="A4TSL3"/>
<dbReference type="GeneID" id="57974623"/>
<dbReference type="KEGG" id="ypp:YPDSF_3934"/>
<dbReference type="GO" id="GO:0030677">
    <property type="term" value="C:ribonuclease P complex"/>
    <property type="evidence" value="ECO:0007669"/>
    <property type="project" value="TreeGrafter"/>
</dbReference>
<dbReference type="GO" id="GO:0042781">
    <property type="term" value="F:3'-tRNA processing endoribonuclease activity"/>
    <property type="evidence" value="ECO:0007669"/>
    <property type="project" value="TreeGrafter"/>
</dbReference>
<dbReference type="GO" id="GO:0004526">
    <property type="term" value="F:ribonuclease P activity"/>
    <property type="evidence" value="ECO:0007669"/>
    <property type="project" value="UniProtKB-UniRule"/>
</dbReference>
<dbReference type="GO" id="GO:0000049">
    <property type="term" value="F:tRNA binding"/>
    <property type="evidence" value="ECO:0007669"/>
    <property type="project" value="UniProtKB-UniRule"/>
</dbReference>
<dbReference type="GO" id="GO:0001682">
    <property type="term" value="P:tRNA 5'-leader removal"/>
    <property type="evidence" value="ECO:0007669"/>
    <property type="project" value="UniProtKB-UniRule"/>
</dbReference>
<dbReference type="FunFam" id="3.30.230.10:FF:000016">
    <property type="entry name" value="Ribonuclease P protein component"/>
    <property type="match status" value="1"/>
</dbReference>
<dbReference type="Gene3D" id="3.30.230.10">
    <property type="match status" value="1"/>
</dbReference>
<dbReference type="HAMAP" id="MF_00227">
    <property type="entry name" value="RNase_P"/>
    <property type="match status" value="1"/>
</dbReference>
<dbReference type="InterPro" id="IPR020568">
    <property type="entry name" value="Ribosomal_Su5_D2-typ_SF"/>
</dbReference>
<dbReference type="InterPro" id="IPR014721">
    <property type="entry name" value="Ribsml_uS5_D2-typ_fold_subgr"/>
</dbReference>
<dbReference type="InterPro" id="IPR000100">
    <property type="entry name" value="RNase_P"/>
</dbReference>
<dbReference type="InterPro" id="IPR020539">
    <property type="entry name" value="RNase_P_CS"/>
</dbReference>
<dbReference type="NCBIfam" id="TIGR00188">
    <property type="entry name" value="rnpA"/>
    <property type="match status" value="1"/>
</dbReference>
<dbReference type="PANTHER" id="PTHR33992">
    <property type="entry name" value="RIBONUCLEASE P PROTEIN COMPONENT"/>
    <property type="match status" value="1"/>
</dbReference>
<dbReference type="PANTHER" id="PTHR33992:SF1">
    <property type="entry name" value="RIBONUCLEASE P PROTEIN COMPONENT"/>
    <property type="match status" value="1"/>
</dbReference>
<dbReference type="Pfam" id="PF00825">
    <property type="entry name" value="Ribonuclease_P"/>
    <property type="match status" value="1"/>
</dbReference>
<dbReference type="SUPFAM" id="SSF54211">
    <property type="entry name" value="Ribosomal protein S5 domain 2-like"/>
    <property type="match status" value="1"/>
</dbReference>
<dbReference type="PROSITE" id="PS00648">
    <property type="entry name" value="RIBONUCLEASE_P"/>
    <property type="match status" value="1"/>
</dbReference>
<proteinExistence type="inferred from homology"/>
<reference key="1">
    <citation type="submission" date="2007-02" db="EMBL/GenBank/DDBJ databases">
        <title>Complete sequence of chromosome of Yersinia pestis Pestoides F.</title>
        <authorList>
            <consortium name="US DOE Joint Genome Institute"/>
            <person name="Copeland A."/>
            <person name="Lucas S."/>
            <person name="Lapidus A."/>
            <person name="Barry K."/>
            <person name="Detter J.C."/>
            <person name="Glavina del Rio T."/>
            <person name="Hammon N."/>
            <person name="Israni S."/>
            <person name="Dalin E."/>
            <person name="Tice H."/>
            <person name="Pitluck S."/>
            <person name="Di Bartolo G."/>
            <person name="Chain P."/>
            <person name="Malfatti S."/>
            <person name="Shin M."/>
            <person name="Vergez L."/>
            <person name="Schmutz J."/>
            <person name="Larimer F."/>
            <person name="Land M."/>
            <person name="Hauser L."/>
            <person name="Worsham P."/>
            <person name="Chu M."/>
            <person name="Bearden S."/>
            <person name="Garcia E."/>
            <person name="Richardson P."/>
        </authorList>
    </citation>
    <scope>NUCLEOTIDE SEQUENCE [LARGE SCALE GENOMIC DNA]</scope>
    <source>
        <strain>Pestoides F</strain>
    </source>
</reference>
<name>RNPA_YERPP</name>